<comment type="function">
    <text evidence="1">Hydrolyzes glucose-6-phosphate to glucose in the endoplasmic reticulum. Forms with the glucose-6-phosphate transporter (SLC37A4/G6PT) the complex responsible for glucose production in the terminal step of glycogenolysis and gluconeogenesis. Hence, it is the key enzyme in homeostatic regulation of blood glucose levels.</text>
</comment>
<comment type="catalytic activity">
    <reaction evidence="1">
        <text>D-glucose 6-phosphate + H2O = D-glucose + phosphate</text>
        <dbReference type="Rhea" id="RHEA:16689"/>
        <dbReference type="ChEBI" id="CHEBI:4167"/>
        <dbReference type="ChEBI" id="CHEBI:15377"/>
        <dbReference type="ChEBI" id="CHEBI:43474"/>
        <dbReference type="ChEBI" id="CHEBI:61548"/>
        <dbReference type="EC" id="3.1.3.9"/>
    </reaction>
</comment>
<comment type="pathway">
    <text evidence="1">Carbohydrate biosynthesis; gluconeogenesis.</text>
</comment>
<comment type="subcellular location">
    <subcellularLocation>
        <location evidence="1">Endoplasmic reticulum membrane</location>
        <topology evidence="2">Multi-pass membrane protein</topology>
    </subcellularLocation>
</comment>
<comment type="similarity">
    <text evidence="3">Belongs to the glucose-6-phosphatase family.</text>
</comment>
<reference key="1">
    <citation type="submission" date="2006-02" db="EMBL/GenBank/DDBJ databases">
        <authorList>
            <consortium name="NIH - Mammalian Gene Collection (MGC) project"/>
        </authorList>
    </citation>
    <scope>NUCLEOTIDE SEQUENCE [LARGE SCALE MRNA]</scope>
    <source>
        <strain>Hereford</strain>
        <tissue>Testis</tissue>
    </source>
</reference>
<evidence type="ECO:0000250" key="1">
    <source>
        <dbReference type="UniProtKB" id="P35575"/>
    </source>
</evidence>
<evidence type="ECO:0000255" key="2"/>
<evidence type="ECO:0000305" key="3"/>
<organism>
    <name type="scientific">Bos taurus</name>
    <name type="common">Bovine</name>
    <dbReference type="NCBI Taxonomy" id="9913"/>
    <lineage>
        <taxon>Eukaryota</taxon>
        <taxon>Metazoa</taxon>
        <taxon>Chordata</taxon>
        <taxon>Craniata</taxon>
        <taxon>Vertebrata</taxon>
        <taxon>Euteleostomi</taxon>
        <taxon>Mammalia</taxon>
        <taxon>Eutheria</taxon>
        <taxon>Laurasiatheria</taxon>
        <taxon>Artiodactyla</taxon>
        <taxon>Ruminantia</taxon>
        <taxon>Pecora</taxon>
        <taxon>Bovidae</taxon>
        <taxon>Bovinae</taxon>
        <taxon>Bos</taxon>
    </lineage>
</organism>
<name>G6PC1_BOVIN</name>
<accession>Q29RU6</accession>
<protein>
    <recommendedName>
        <fullName>Glucose-6-phosphatase catalytic subunit 1</fullName>
        <ecNumber evidence="1">3.1.3.9</ecNumber>
    </recommendedName>
    <alternativeName>
        <fullName>Glucose-6-phosphatase</fullName>
        <shortName>G-6-Pase</shortName>
        <shortName>G6Pase</shortName>
    </alternativeName>
</protein>
<keyword id="KW-0256">Endoplasmic reticulum</keyword>
<keyword id="KW-0312">Gluconeogenesis</keyword>
<keyword id="KW-0325">Glycoprotein</keyword>
<keyword id="KW-0378">Hydrolase</keyword>
<keyword id="KW-0472">Membrane</keyword>
<keyword id="KW-1185">Reference proteome</keyword>
<keyword id="KW-0812">Transmembrane</keyword>
<keyword id="KW-1133">Transmembrane helix</keyword>
<dbReference type="EC" id="3.1.3.9" evidence="1"/>
<dbReference type="EMBL" id="BC114011">
    <property type="protein sequence ID" value="AAI14012.1"/>
    <property type="molecule type" value="mRNA"/>
</dbReference>
<dbReference type="RefSeq" id="NP_001069592.1">
    <property type="nucleotide sequence ID" value="NM_001076124.2"/>
</dbReference>
<dbReference type="FunCoup" id="Q29RU6">
    <property type="interactions" value="247"/>
</dbReference>
<dbReference type="STRING" id="9913.ENSBTAP00000013436"/>
<dbReference type="GlyCosmos" id="Q29RU6">
    <property type="glycosylation" value="1 site, No reported glycans"/>
</dbReference>
<dbReference type="GlyGen" id="Q29RU6">
    <property type="glycosylation" value="1 site"/>
</dbReference>
<dbReference type="PaxDb" id="9913-ENSBTAP00000013436"/>
<dbReference type="Ensembl" id="ENSBTAT00000013436.4">
    <property type="protein sequence ID" value="ENSBTAP00000013436.3"/>
    <property type="gene ID" value="ENSBTAG00000010184.4"/>
</dbReference>
<dbReference type="GeneID" id="538710"/>
<dbReference type="KEGG" id="bta:538710"/>
<dbReference type="CTD" id="2538"/>
<dbReference type="VEuPathDB" id="HostDB:ENSBTAG00000010184"/>
<dbReference type="VGNC" id="VGNC:29178">
    <property type="gene designation" value="G6PC1"/>
</dbReference>
<dbReference type="eggNOG" id="ENOG502QS9B">
    <property type="taxonomic scope" value="Eukaryota"/>
</dbReference>
<dbReference type="GeneTree" id="ENSGT00950000183150"/>
<dbReference type="HOGENOM" id="CLU_052517_0_0_1"/>
<dbReference type="InParanoid" id="Q29RU6"/>
<dbReference type="OMA" id="WCEHPEW"/>
<dbReference type="OrthoDB" id="6416209at2759"/>
<dbReference type="TreeFam" id="TF324388"/>
<dbReference type="Reactome" id="R-BTA-70263">
    <property type="pathway name" value="Gluconeogenesis"/>
</dbReference>
<dbReference type="UniPathway" id="UPA00138"/>
<dbReference type="Proteomes" id="UP000009136">
    <property type="component" value="Chromosome 19"/>
</dbReference>
<dbReference type="Bgee" id="ENSBTAG00000010184">
    <property type="expression patterns" value="Expressed in metanephros cortex and 31 other cell types or tissues"/>
</dbReference>
<dbReference type="GO" id="GO:0005789">
    <property type="term" value="C:endoplasmic reticulum membrane"/>
    <property type="evidence" value="ECO:0007669"/>
    <property type="project" value="UniProtKB-SubCell"/>
</dbReference>
<dbReference type="GO" id="GO:0016020">
    <property type="term" value="C:membrane"/>
    <property type="evidence" value="ECO:0000318"/>
    <property type="project" value="GO_Central"/>
</dbReference>
<dbReference type="GO" id="GO:0004346">
    <property type="term" value="F:glucose-6-phosphatase activity"/>
    <property type="evidence" value="ECO:0000318"/>
    <property type="project" value="GO_Central"/>
</dbReference>
<dbReference type="GO" id="GO:0042301">
    <property type="term" value="F:phosphate ion binding"/>
    <property type="evidence" value="ECO:0007669"/>
    <property type="project" value="Ensembl"/>
</dbReference>
<dbReference type="GO" id="GO:0016773">
    <property type="term" value="F:phosphotransferase activity, alcohol group as acceptor"/>
    <property type="evidence" value="ECO:0007669"/>
    <property type="project" value="Ensembl"/>
</dbReference>
<dbReference type="GO" id="GO:0042632">
    <property type="term" value="P:cholesterol homeostasis"/>
    <property type="evidence" value="ECO:0007669"/>
    <property type="project" value="Ensembl"/>
</dbReference>
<dbReference type="GO" id="GO:0006094">
    <property type="term" value="P:gluconeogenesis"/>
    <property type="evidence" value="ECO:0000318"/>
    <property type="project" value="GO_Central"/>
</dbReference>
<dbReference type="GO" id="GO:0051156">
    <property type="term" value="P:glucose 6-phosphate metabolic process"/>
    <property type="evidence" value="ECO:0000318"/>
    <property type="project" value="GO_Central"/>
</dbReference>
<dbReference type="GO" id="GO:0042593">
    <property type="term" value="P:glucose homeostasis"/>
    <property type="evidence" value="ECO:0007669"/>
    <property type="project" value="Ensembl"/>
</dbReference>
<dbReference type="GO" id="GO:0015760">
    <property type="term" value="P:glucose-6-phosphate transport"/>
    <property type="evidence" value="ECO:0007669"/>
    <property type="project" value="Ensembl"/>
</dbReference>
<dbReference type="GO" id="GO:0005980">
    <property type="term" value="P:glycogen catabolic process"/>
    <property type="evidence" value="ECO:0007669"/>
    <property type="project" value="Ensembl"/>
</dbReference>
<dbReference type="GO" id="GO:0035264">
    <property type="term" value="P:multicellular organism growth"/>
    <property type="evidence" value="ECO:0007669"/>
    <property type="project" value="Ensembl"/>
</dbReference>
<dbReference type="GO" id="GO:0010468">
    <property type="term" value="P:regulation of gene expression"/>
    <property type="evidence" value="ECO:0007669"/>
    <property type="project" value="Ensembl"/>
</dbReference>
<dbReference type="GO" id="GO:0008202">
    <property type="term" value="P:steroid metabolic process"/>
    <property type="evidence" value="ECO:0007669"/>
    <property type="project" value="Ensembl"/>
</dbReference>
<dbReference type="GO" id="GO:0006641">
    <property type="term" value="P:triglyceride metabolic process"/>
    <property type="evidence" value="ECO:0007669"/>
    <property type="project" value="Ensembl"/>
</dbReference>
<dbReference type="GO" id="GO:0046415">
    <property type="term" value="P:urate metabolic process"/>
    <property type="evidence" value="ECO:0007669"/>
    <property type="project" value="Ensembl"/>
</dbReference>
<dbReference type="CDD" id="cd03381">
    <property type="entry name" value="PAP2_glucose_6_phosphatase"/>
    <property type="match status" value="1"/>
</dbReference>
<dbReference type="FunFam" id="1.20.144.10:FF:000010">
    <property type="entry name" value="Glucose-6-phosphatase"/>
    <property type="match status" value="1"/>
</dbReference>
<dbReference type="Gene3D" id="1.20.144.10">
    <property type="entry name" value="Phosphatidic acid phosphatase type 2/haloperoxidase"/>
    <property type="match status" value="1"/>
</dbReference>
<dbReference type="InterPro" id="IPR016275">
    <property type="entry name" value="Glucose-6-phosphatase"/>
</dbReference>
<dbReference type="InterPro" id="IPR036938">
    <property type="entry name" value="P_Acid_Pase_2/haloperoxi_sf"/>
</dbReference>
<dbReference type="InterPro" id="IPR000326">
    <property type="entry name" value="P_Acid_Pase_2/haloperoxidase"/>
</dbReference>
<dbReference type="PANTHER" id="PTHR12591">
    <property type="entry name" value="GLUCOSE-6-PHOSPHATASE"/>
    <property type="match status" value="1"/>
</dbReference>
<dbReference type="PANTHER" id="PTHR12591:SF3">
    <property type="entry name" value="GLUCOSE-6-PHOSPHATASE CATALYTIC SUBUNIT 1"/>
    <property type="match status" value="1"/>
</dbReference>
<dbReference type="Pfam" id="PF01569">
    <property type="entry name" value="PAP2"/>
    <property type="match status" value="1"/>
</dbReference>
<dbReference type="PIRSF" id="PIRSF000905">
    <property type="entry name" value="Glucose-6-phosphatase"/>
    <property type="match status" value="1"/>
</dbReference>
<dbReference type="SMART" id="SM00014">
    <property type="entry name" value="acidPPc"/>
    <property type="match status" value="1"/>
</dbReference>
<dbReference type="SUPFAM" id="SSF48317">
    <property type="entry name" value="Acid phosphatase/Vanadium-dependent haloperoxidase"/>
    <property type="match status" value="1"/>
</dbReference>
<gene>
    <name type="primary">G6PC1</name>
    <name type="synonym">G6PC</name>
</gene>
<feature type="chain" id="PRO_0000350564" description="Glucose-6-phosphatase catalytic subunit 1">
    <location>
        <begin position="1"/>
        <end position="357"/>
    </location>
</feature>
<feature type="topological domain" description="Lumenal" evidence="1">
    <location>
        <begin position="1"/>
        <end position="28"/>
    </location>
</feature>
<feature type="transmembrane region" description="Helical" evidence="2">
    <location>
        <begin position="29"/>
        <end position="49"/>
    </location>
</feature>
<feature type="topological domain" description="Cytoplasmic" evidence="1">
    <location>
        <begin position="50"/>
        <end position="60"/>
    </location>
</feature>
<feature type="transmembrane region" description="Helical" evidence="2">
    <location>
        <begin position="61"/>
        <end position="81"/>
    </location>
</feature>
<feature type="topological domain" description="Lumenal" evidence="1">
    <location>
        <begin position="82"/>
        <end position="117"/>
    </location>
</feature>
<feature type="transmembrane region" description="Helical" evidence="2">
    <location>
        <begin position="118"/>
        <end position="138"/>
    </location>
</feature>
<feature type="topological domain" description="Cytoplasmic" evidence="1">
    <location>
        <begin position="139"/>
        <end position="147"/>
    </location>
</feature>
<feature type="transmembrane region" description="Helical" evidence="2">
    <location>
        <begin position="148"/>
        <end position="168"/>
    </location>
</feature>
<feature type="topological domain" description="Lumenal" evidence="1">
    <location>
        <begin position="169"/>
        <end position="170"/>
    </location>
</feature>
<feature type="transmembrane region" description="Helical" evidence="2">
    <location>
        <begin position="171"/>
        <end position="191"/>
    </location>
</feature>
<feature type="topological domain" description="Cytoplasmic" evidence="1">
    <location>
        <begin position="192"/>
        <end position="209"/>
    </location>
</feature>
<feature type="transmembrane region" description="Helical" evidence="2">
    <location>
        <begin position="210"/>
        <end position="230"/>
    </location>
</feature>
<feature type="topological domain" description="Lumenal" evidence="1">
    <location>
        <begin position="231"/>
        <end position="254"/>
    </location>
</feature>
<feature type="transmembrane region" description="Helical" evidence="2">
    <location>
        <begin position="255"/>
        <end position="275"/>
    </location>
</feature>
<feature type="topological domain" description="Cytoplasmic" evidence="1">
    <location>
        <begin position="276"/>
        <end position="291"/>
    </location>
</feature>
<feature type="transmembrane region" description="Helical" evidence="2">
    <location>
        <begin position="292"/>
        <end position="312"/>
    </location>
</feature>
<feature type="topological domain" description="Lumenal" evidence="1">
    <location>
        <begin position="313"/>
        <end position="320"/>
    </location>
</feature>
<feature type="transmembrane region" description="Helical" evidence="2">
    <location>
        <begin position="321"/>
        <end position="341"/>
    </location>
</feature>
<feature type="topological domain" description="Cytoplasmic" evidence="1">
    <location>
        <begin position="342"/>
        <end position="357"/>
    </location>
</feature>
<feature type="short sequence motif" description="Prevents secretion from ER" evidence="2">
    <location>
        <begin position="354"/>
        <end position="357"/>
    </location>
</feature>
<feature type="active site" description="Proton donor" evidence="2">
    <location>
        <position position="119"/>
    </location>
</feature>
<feature type="active site" description="Nucleophile" evidence="1">
    <location>
        <position position="176"/>
    </location>
</feature>
<feature type="binding site" evidence="2">
    <location>
        <position position="83"/>
    </location>
    <ligand>
        <name>substrate</name>
    </ligand>
</feature>
<feature type="binding site" evidence="2">
    <location>
        <position position="170"/>
    </location>
    <ligand>
        <name>substrate</name>
    </ligand>
</feature>
<feature type="glycosylation site" description="N-linked (GlcNAc...) asparagine" evidence="2">
    <location>
        <position position="96"/>
    </location>
</feature>
<proteinExistence type="evidence at transcript level"/>
<sequence>MEKGMNVLHDFGIQSTHYLQVNYQNSQDWFILVSVIADLRNAFYVLFPIWFHLREAVGIKLLWVAVIGDWLNLVFKWILFGQRPYWWVLDTDYYSNTSAPLIKQFPVTCETGPGSPSGHAMGTAGVYYVMVTSTLSIFRGKKKPTYRFRCLNVMLWLGFWVVQLNVCLSRIYLAAHFPHQVVAGVLSGIAVAETFRHIQSIYNASLKKYFLITCFLFSFAIGFYLLLKWLGVDLLWTLEKAKRRCERPEWVHIDTTPFASLLKNLGTLFGLGLALNSSMYRESCKGKLSKWFPFRLSCIVASLVLLHLFDSLKPPSQIELIFYVLSFCKSAAVPLASVSLIPYCLAWVLGQPNKKTV</sequence>